<keyword id="KW-0067">ATP-binding</keyword>
<keyword id="KW-0131">Cell cycle</keyword>
<keyword id="KW-0132">Cell division</keyword>
<keyword id="KW-1003">Cell membrane</keyword>
<keyword id="KW-0418">Kinase</keyword>
<keyword id="KW-0472">Membrane</keyword>
<keyword id="KW-0547">Nucleotide-binding</keyword>
<keyword id="KW-1185">Reference proteome</keyword>
<keyword id="KW-0723">Serine/threonine-protein kinase</keyword>
<keyword id="KW-0808">Transferase</keyword>
<keyword id="KW-0879">Wnt signaling pathway</keyword>
<name>CDK14_XENLA</name>
<protein>
    <recommendedName>
        <fullName>Cyclin-dependent kinase 14</fullName>
        <ecNumber>2.7.11.22</ecNumber>
    </recommendedName>
    <alternativeName>
        <fullName>Cell division protein kinase 14</fullName>
    </alternativeName>
</protein>
<sequence length="435" mass="49230">MCDMIESQPAQKIGKMKKLRRTLSDSFSRIALKKDENAIDEICVTKMSTRNCQGIDSVIKHLDPIPEDKKVRVQRTQSSFDPFEKTSNQPTSPKFGKADSYEKLEKLGEGSYATVFKGKSKVNGKLVALKVIRLQEEEGTPFTAIREASLLKGLKHANIVLLHDIIHTKETLTLVFEYVHTDLCQYMDKHPGGLNPENVKLFLFQLLRGLSYIHQGHILHRDLKPQNLLISDTGELKLADFGLARAKSVPSHTYSNEVVTLWYRPPDVLLGSTDYSTCLDMWGVGCIFVEMIQGVAAFPGMKDIQDQLERIFLILGTPIEETWPAVHSLPHFEPERFTLYGPKNLRQAWNKLSYVNHAEDLASKLLQCFPKNRLSAQAALNHDYFSDLPPRLWELSDMSSIFTVPNVKLQPEAGESMRVFGKNNSFSKSLSNSKH</sequence>
<gene>
    <name type="primary">cdk14</name>
    <name type="synonym">pftk1</name>
</gene>
<reference key="1">
    <citation type="submission" date="2004-06" db="EMBL/GenBank/DDBJ databases">
        <authorList>
            <consortium name="NIH - Xenopus Gene Collection (XGC) project"/>
        </authorList>
    </citation>
    <scope>NUCLEOTIDE SEQUENCE [LARGE SCALE MRNA]</scope>
    <source>
        <tissue>Kidney</tissue>
    </source>
</reference>
<dbReference type="EC" id="2.7.11.22"/>
<dbReference type="EMBL" id="BC075148">
    <property type="protein sequence ID" value="AAH75148.1"/>
    <property type="molecule type" value="mRNA"/>
</dbReference>
<dbReference type="RefSeq" id="NP_001086352.1">
    <property type="nucleotide sequence ID" value="NM_001092883.1"/>
</dbReference>
<dbReference type="SMR" id="Q6DJM7"/>
<dbReference type="DNASU" id="444781"/>
<dbReference type="AGR" id="Xenbase:XB-GENE-943254"/>
<dbReference type="Xenbase" id="XB-GENE-943254">
    <property type="gene designation" value="cdk14.L"/>
</dbReference>
<dbReference type="Proteomes" id="UP000186698">
    <property type="component" value="Unplaced"/>
</dbReference>
<dbReference type="Bgee" id="444781">
    <property type="expression patterns" value="Expressed in internal ear and 15 other cell types or tissues"/>
</dbReference>
<dbReference type="GO" id="GO:0005737">
    <property type="term" value="C:cytoplasm"/>
    <property type="evidence" value="ECO:0000318"/>
    <property type="project" value="GO_Central"/>
</dbReference>
<dbReference type="GO" id="GO:0000308">
    <property type="term" value="C:cytoplasmic cyclin-dependent protein kinase holoenzyme complex"/>
    <property type="evidence" value="ECO:0000250"/>
    <property type="project" value="UniProtKB"/>
</dbReference>
<dbReference type="GO" id="GO:0005829">
    <property type="term" value="C:cytosol"/>
    <property type="evidence" value="ECO:0000318"/>
    <property type="project" value="GO_Central"/>
</dbReference>
<dbReference type="GO" id="GO:0005634">
    <property type="term" value="C:nucleus"/>
    <property type="evidence" value="ECO:0000318"/>
    <property type="project" value="GO_Central"/>
</dbReference>
<dbReference type="GO" id="GO:0005886">
    <property type="term" value="C:plasma membrane"/>
    <property type="evidence" value="ECO:0000250"/>
    <property type="project" value="UniProtKB"/>
</dbReference>
<dbReference type="GO" id="GO:0005524">
    <property type="term" value="F:ATP binding"/>
    <property type="evidence" value="ECO:0007669"/>
    <property type="project" value="UniProtKB-KW"/>
</dbReference>
<dbReference type="GO" id="GO:0030332">
    <property type="term" value="F:cyclin binding"/>
    <property type="evidence" value="ECO:0000318"/>
    <property type="project" value="GO_Central"/>
</dbReference>
<dbReference type="GO" id="GO:0004693">
    <property type="term" value="F:cyclin-dependent protein serine/threonine kinase activity"/>
    <property type="evidence" value="ECO:0000250"/>
    <property type="project" value="UniProtKB"/>
</dbReference>
<dbReference type="GO" id="GO:0106310">
    <property type="term" value="F:protein serine kinase activity"/>
    <property type="evidence" value="ECO:0007669"/>
    <property type="project" value="RHEA"/>
</dbReference>
<dbReference type="GO" id="GO:0051301">
    <property type="term" value="P:cell division"/>
    <property type="evidence" value="ECO:0007669"/>
    <property type="project" value="UniProtKB-KW"/>
</dbReference>
<dbReference type="GO" id="GO:0000086">
    <property type="term" value="P:G2/M transition of mitotic cell cycle"/>
    <property type="evidence" value="ECO:0000250"/>
    <property type="project" value="UniProtKB"/>
</dbReference>
<dbReference type="GO" id="GO:0060828">
    <property type="term" value="P:regulation of canonical Wnt signaling pathway"/>
    <property type="evidence" value="ECO:0000250"/>
    <property type="project" value="UniProtKB"/>
</dbReference>
<dbReference type="GO" id="GO:1901987">
    <property type="term" value="P:regulation of cell cycle phase transition"/>
    <property type="evidence" value="ECO:0000318"/>
    <property type="project" value="GO_Central"/>
</dbReference>
<dbReference type="GO" id="GO:0016055">
    <property type="term" value="P:Wnt signaling pathway"/>
    <property type="evidence" value="ECO:0007669"/>
    <property type="project" value="UniProtKB-KW"/>
</dbReference>
<dbReference type="FunFam" id="1.10.510.10:FF:000131">
    <property type="entry name" value="cyclin-dependent kinase 14 isoform X1"/>
    <property type="match status" value="1"/>
</dbReference>
<dbReference type="FunFam" id="3.30.200.20:FF:000007">
    <property type="entry name" value="Cyclin-dependent kinase 14, putative"/>
    <property type="match status" value="1"/>
</dbReference>
<dbReference type="Gene3D" id="3.30.200.20">
    <property type="entry name" value="Phosphorylase Kinase, domain 1"/>
    <property type="match status" value="1"/>
</dbReference>
<dbReference type="Gene3D" id="1.10.510.10">
    <property type="entry name" value="Transferase(Phosphotransferase) domain 1"/>
    <property type="match status" value="1"/>
</dbReference>
<dbReference type="InterPro" id="IPR050108">
    <property type="entry name" value="CDK"/>
</dbReference>
<dbReference type="InterPro" id="IPR011009">
    <property type="entry name" value="Kinase-like_dom_sf"/>
</dbReference>
<dbReference type="InterPro" id="IPR000719">
    <property type="entry name" value="Prot_kinase_dom"/>
</dbReference>
<dbReference type="InterPro" id="IPR017441">
    <property type="entry name" value="Protein_kinase_ATP_BS"/>
</dbReference>
<dbReference type="InterPro" id="IPR008271">
    <property type="entry name" value="Ser/Thr_kinase_AS"/>
</dbReference>
<dbReference type="PANTHER" id="PTHR24056">
    <property type="entry name" value="CELL DIVISION PROTEIN KINASE"/>
    <property type="match status" value="1"/>
</dbReference>
<dbReference type="PANTHER" id="PTHR24056:SF154">
    <property type="entry name" value="CYCLIN-DEPENDENT KINASE 14"/>
    <property type="match status" value="1"/>
</dbReference>
<dbReference type="Pfam" id="PF00069">
    <property type="entry name" value="Pkinase"/>
    <property type="match status" value="1"/>
</dbReference>
<dbReference type="SMART" id="SM00220">
    <property type="entry name" value="S_TKc"/>
    <property type="match status" value="1"/>
</dbReference>
<dbReference type="SUPFAM" id="SSF56112">
    <property type="entry name" value="Protein kinase-like (PK-like)"/>
    <property type="match status" value="1"/>
</dbReference>
<dbReference type="PROSITE" id="PS00107">
    <property type="entry name" value="PROTEIN_KINASE_ATP"/>
    <property type="match status" value="1"/>
</dbReference>
<dbReference type="PROSITE" id="PS50011">
    <property type="entry name" value="PROTEIN_KINASE_DOM"/>
    <property type="match status" value="1"/>
</dbReference>
<dbReference type="PROSITE" id="PS00108">
    <property type="entry name" value="PROTEIN_KINASE_ST"/>
    <property type="match status" value="1"/>
</dbReference>
<evidence type="ECO:0000250" key="1"/>
<evidence type="ECO:0000255" key="2">
    <source>
        <dbReference type="PROSITE-ProRule" id="PRU00159"/>
    </source>
</evidence>
<evidence type="ECO:0000255" key="3">
    <source>
        <dbReference type="PROSITE-ProRule" id="PRU10027"/>
    </source>
</evidence>
<evidence type="ECO:0000256" key="4">
    <source>
        <dbReference type="SAM" id="MobiDB-lite"/>
    </source>
</evidence>
<evidence type="ECO:0000305" key="5"/>
<proteinExistence type="evidence at transcript level"/>
<comment type="function">
    <text evidence="1">Serine/threonine-protein kinase involved in the control of the eukaryotic cell cycle, whose activity is controlled by an associated cyclin. Acts as a cell-cycle regulator of Wnt signaling pathway during G2/M phase by mediating the phosphorylation of lrp6, leading to the activation of the Wnt signaling pathway (By similarity).</text>
</comment>
<comment type="catalytic activity">
    <reaction>
        <text>L-seryl-[protein] + ATP = O-phospho-L-seryl-[protein] + ADP + H(+)</text>
        <dbReference type="Rhea" id="RHEA:17989"/>
        <dbReference type="Rhea" id="RHEA-COMP:9863"/>
        <dbReference type="Rhea" id="RHEA-COMP:11604"/>
        <dbReference type="ChEBI" id="CHEBI:15378"/>
        <dbReference type="ChEBI" id="CHEBI:29999"/>
        <dbReference type="ChEBI" id="CHEBI:30616"/>
        <dbReference type="ChEBI" id="CHEBI:83421"/>
        <dbReference type="ChEBI" id="CHEBI:456216"/>
        <dbReference type="EC" id="2.7.11.22"/>
    </reaction>
</comment>
<comment type="catalytic activity">
    <reaction>
        <text>L-threonyl-[protein] + ATP = O-phospho-L-threonyl-[protein] + ADP + H(+)</text>
        <dbReference type="Rhea" id="RHEA:46608"/>
        <dbReference type="Rhea" id="RHEA-COMP:11060"/>
        <dbReference type="Rhea" id="RHEA-COMP:11605"/>
        <dbReference type="ChEBI" id="CHEBI:15378"/>
        <dbReference type="ChEBI" id="CHEBI:30013"/>
        <dbReference type="ChEBI" id="CHEBI:30616"/>
        <dbReference type="ChEBI" id="CHEBI:61977"/>
        <dbReference type="ChEBI" id="CHEBI:456216"/>
        <dbReference type="EC" id="2.7.11.22"/>
    </reaction>
</comment>
<comment type="subunit">
    <text evidence="1">Interacts with ccny; ccny mediates its recruitment to the plasma membrane and promotes phosphorylation of lrp6.</text>
</comment>
<comment type="subcellular location">
    <subcellularLocation>
        <location evidence="1">Cell membrane</location>
        <topology evidence="1">Peripheral membrane protein</topology>
    </subcellularLocation>
    <text evidence="1">Recruited to the cell membrane by CCNY.</text>
</comment>
<comment type="similarity">
    <text evidence="5">Belongs to the protein kinase superfamily. CMGC Ser/Thr protein kinase family. CDC2/CDKX subfamily.</text>
</comment>
<feature type="chain" id="PRO_0000391903" description="Cyclin-dependent kinase 14">
    <location>
        <begin position="1"/>
        <end position="435"/>
    </location>
</feature>
<feature type="domain" description="Protein kinase" evidence="2">
    <location>
        <begin position="101"/>
        <end position="385"/>
    </location>
</feature>
<feature type="region of interest" description="Disordered" evidence="4">
    <location>
        <begin position="75"/>
        <end position="97"/>
    </location>
</feature>
<feature type="compositionally biased region" description="Polar residues" evidence="4">
    <location>
        <begin position="75"/>
        <end position="92"/>
    </location>
</feature>
<feature type="active site" description="Proton acceptor" evidence="2 3">
    <location>
        <position position="222"/>
    </location>
</feature>
<feature type="binding site" evidence="2">
    <location>
        <begin position="107"/>
        <end position="115"/>
    </location>
    <ligand>
        <name>ATP</name>
        <dbReference type="ChEBI" id="CHEBI:30616"/>
    </ligand>
</feature>
<feature type="binding site" evidence="2">
    <location>
        <position position="130"/>
    </location>
    <ligand>
        <name>ATP</name>
        <dbReference type="ChEBI" id="CHEBI:30616"/>
    </ligand>
</feature>
<organism>
    <name type="scientific">Xenopus laevis</name>
    <name type="common">African clawed frog</name>
    <dbReference type="NCBI Taxonomy" id="8355"/>
    <lineage>
        <taxon>Eukaryota</taxon>
        <taxon>Metazoa</taxon>
        <taxon>Chordata</taxon>
        <taxon>Craniata</taxon>
        <taxon>Vertebrata</taxon>
        <taxon>Euteleostomi</taxon>
        <taxon>Amphibia</taxon>
        <taxon>Batrachia</taxon>
        <taxon>Anura</taxon>
        <taxon>Pipoidea</taxon>
        <taxon>Pipidae</taxon>
        <taxon>Xenopodinae</taxon>
        <taxon>Xenopus</taxon>
        <taxon>Xenopus</taxon>
    </lineage>
</organism>
<accession>Q6DJM7</accession>